<feature type="chain" id="PRO_0000231314" description="S-adenosylmethionine:tRNA ribosyltransferase-isomerase">
    <location>
        <begin position="1"/>
        <end position="350"/>
    </location>
</feature>
<name>QUEA_BACCZ</name>
<sequence>MDINLFDFHLPEELIAQVPLEERETSRLMVLDRETGDIEHKHFTDILSYLHEGDCLVLNETKVMPARLQGVKEDTGAHIEVLLLKQEEGDKWETLVKPAKRVKEGTVISFGEGKLKATCTGTADQGGRQLEFSYDGIFYEILDELGEMPLPPYIKETLEDRDRYQTVYAKEIGSAAAPTAGLHFTEELLEKLKQKGVELAFITLHVGLGTFRPVSADTIEEHHMHAEYYHMSEETAALLNRVKENGGRIITVGTTSTRTLETIATDHDGKLCAASGWTDIFMYPGYEFKAIDGLITNFHLPKSTLIMLVSAFANRDNVLHAYNEAVKEKYRFFSFGDAMFVASHAKMGNK</sequence>
<proteinExistence type="inferred from homology"/>
<evidence type="ECO:0000255" key="1">
    <source>
        <dbReference type="HAMAP-Rule" id="MF_00113"/>
    </source>
</evidence>
<organism>
    <name type="scientific">Bacillus cereus (strain ZK / E33L)</name>
    <dbReference type="NCBI Taxonomy" id="288681"/>
    <lineage>
        <taxon>Bacteria</taxon>
        <taxon>Bacillati</taxon>
        <taxon>Bacillota</taxon>
        <taxon>Bacilli</taxon>
        <taxon>Bacillales</taxon>
        <taxon>Bacillaceae</taxon>
        <taxon>Bacillus</taxon>
        <taxon>Bacillus cereus group</taxon>
    </lineage>
</organism>
<protein>
    <recommendedName>
        <fullName evidence="1">S-adenosylmethionine:tRNA ribosyltransferase-isomerase</fullName>
        <ecNumber evidence="1">2.4.99.17</ecNumber>
    </recommendedName>
    <alternativeName>
        <fullName evidence="1">Queuosine biosynthesis protein QueA</fullName>
    </alternativeName>
</protein>
<reference key="1">
    <citation type="journal article" date="2006" name="J. Bacteriol.">
        <title>Pathogenomic sequence analysis of Bacillus cereus and Bacillus thuringiensis isolates closely related to Bacillus anthracis.</title>
        <authorList>
            <person name="Han C.S."/>
            <person name="Xie G."/>
            <person name="Challacombe J.F."/>
            <person name="Altherr M.R."/>
            <person name="Bhotika S.S."/>
            <person name="Bruce D."/>
            <person name="Campbell C.S."/>
            <person name="Campbell M.L."/>
            <person name="Chen J."/>
            <person name="Chertkov O."/>
            <person name="Cleland C."/>
            <person name="Dimitrijevic M."/>
            <person name="Doggett N.A."/>
            <person name="Fawcett J.J."/>
            <person name="Glavina T."/>
            <person name="Goodwin L.A."/>
            <person name="Hill K.K."/>
            <person name="Hitchcock P."/>
            <person name="Jackson P.J."/>
            <person name="Keim P."/>
            <person name="Kewalramani A.R."/>
            <person name="Longmire J."/>
            <person name="Lucas S."/>
            <person name="Malfatti S."/>
            <person name="McMurry K."/>
            <person name="Meincke L.J."/>
            <person name="Misra M."/>
            <person name="Moseman B.L."/>
            <person name="Mundt M."/>
            <person name="Munk A.C."/>
            <person name="Okinaka R.T."/>
            <person name="Parson-Quintana B."/>
            <person name="Reilly L.P."/>
            <person name="Richardson P."/>
            <person name="Robinson D.L."/>
            <person name="Rubin E."/>
            <person name="Saunders E."/>
            <person name="Tapia R."/>
            <person name="Tesmer J.G."/>
            <person name="Thayer N."/>
            <person name="Thompson L.S."/>
            <person name="Tice H."/>
            <person name="Ticknor L.O."/>
            <person name="Wills P.L."/>
            <person name="Brettin T.S."/>
            <person name="Gilna P."/>
        </authorList>
    </citation>
    <scope>NUCLEOTIDE SEQUENCE [LARGE SCALE GENOMIC DNA]</scope>
    <source>
        <strain>ZK / E33L</strain>
    </source>
</reference>
<accession>Q634C6</accession>
<gene>
    <name evidence="1" type="primary">queA</name>
    <name type="ordered locus">BCE33L4162</name>
</gene>
<dbReference type="EC" id="2.4.99.17" evidence="1"/>
<dbReference type="EMBL" id="CP000001">
    <property type="protein sequence ID" value="AAU16107.1"/>
    <property type="molecule type" value="Genomic_DNA"/>
</dbReference>
<dbReference type="RefSeq" id="WP_000354037.1">
    <property type="nucleotide sequence ID" value="NC_006274.1"/>
</dbReference>
<dbReference type="SMR" id="Q634C6"/>
<dbReference type="KEGG" id="bcz:BCE33L4162"/>
<dbReference type="PATRIC" id="fig|288681.22.peg.1221"/>
<dbReference type="UniPathway" id="UPA00392"/>
<dbReference type="Proteomes" id="UP000002612">
    <property type="component" value="Chromosome"/>
</dbReference>
<dbReference type="GO" id="GO:0005737">
    <property type="term" value="C:cytoplasm"/>
    <property type="evidence" value="ECO:0007669"/>
    <property type="project" value="UniProtKB-SubCell"/>
</dbReference>
<dbReference type="GO" id="GO:0051075">
    <property type="term" value="F:S-adenosylmethionine:tRNA ribosyltransferase-isomerase activity"/>
    <property type="evidence" value="ECO:0007669"/>
    <property type="project" value="UniProtKB-EC"/>
</dbReference>
<dbReference type="GO" id="GO:0008616">
    <property type="term" value="P:queuosine biosynthetic process"/>
    <property type="evidence" value="ECO:0007669"/>
    <property type="project" value="UniProtKB-UniRule"/>
</dbReference>
<dbReference type="GO" id="GO:0002099">
    <property type="term" value="P:tRNA wobble guanine modification"/>
    <property type="evidence" value="ECO:0007669"/>
    <property type="project" value="TreeGrafter"/>
</dbReference>
<dbReference type="FunFam" id="2.40.10.240:FF:000002">
    <property type="entry name" value="S-adenosylmethionine:tRNA ribosyltransferase-isomerase"/>
    <property type="match status" value="1"/>
</dbReference>
<dbReference type="FunFam" id="3.40.1780.10:FF:000001">
    <property type="entry name" value="S-adenosylmethionine:tRNA ribosyltransferase-isomerase"/>
    <property type="match status" value="1"/>
</dbReference>
<dbReference type="Gene3D" id="2.40.10.240">
    <property type="entry name" value="QueA-like"/>
    <property type="match status" value="1"/>
</dbReference>
<dbReference type="Gene3D" id="3.40.1780.10">
    <property type="entry name" value="QueA-like"/>
    <property type="match status" value="1"/>
</dbReference>
<dbReference type="HAMAP" id="MF_00113">
    <property type="entry name" value="QueA"/>
    <property type="match status" value="1"/>
</dbReference>
<dbReference type="InterPro" id="IPR003699">
    <property type="entry name" value="QueA"/>
</dbReference>
<dbReference type="InterPro" id="IPR042118">
    <property type="entry name" value="QueA_dom1"/>
</dbReference>
<dbReference type="InterPro" id="IPR042119">
    <property type="entry name" value="QueA_dom2"/>
</dbReference>
<dbReference type="InterPro" id="IPR036100">
    <property type="entry name" value="QueA_sf"/>
</dbReference>
<dbReference type="NCBIfam" id="NF001140">
    <property type="entry name" value="PRK00147.1"/>
    <property type="match status" value="1"/>
</dbReference>
<dbReference type="NCBIfam" id="TIGR00113">
    <property type="entry name" value="queA"/>
    <property type="match status" value="1"/>
</dbReference>
<dbReference type="PANTHER" id="PTHR30307">
    <property type="entry name" value="S-ADENOSYLMETHIONINE:TRNA RIBOSYLTRANSFERASE-ISOMERASE"/>
    <property type="match status" value="1"/>
</dbReference>
<dbReference type="PANTHER" id="PTHR30307:SF0">
    <property type="entry name" value="S-ADENOSYLMETHIONINE:TRNA RIBOSYLTRANSFERASE-ISOMERASE"/>
    <property type="match status" value="1"/>
</dbReference>
<dbReference type="Pfam" id="PF02547">
    <property type="entry name" value="Queuosine_synth"/>
    <property type="match status" value="1"/>
</dbReference>
<dbReference type="SUPFAM" id="SSF111337">
    <property type="entry name" value="QueA-like"/>
    <property type="match status" value="1"/>
</dbReference>
<comment type="function">
    <text evidence="1">Transfers and isomerizes the ribose moiety from AdoMet to the 7-aminomethyl group of 7-deazaguanine (preQ1-tRNA) to give epoxyqueuosine (oQ-tRNA).</text>
</comment>
<comment type="catalytic activity">
    <reaction evidence="1">
        <text>7-aminomethyl-7-carbaguanosine(34) in tRNA + S-adenosyl-L-methionine = epoxyqueuosine(34) in tRNA + adenine + L-methionine + 2 H(+)</text>
        <dbReference type="Rhea" id="RHEA:32155"/>
        <dbReference type="Rhea" id="RHEA-COMP:10342"/>
        <dbReference type="Rhea" id="RHEA-COMP:18582"/>
        <dbReference type="ChEBI" id="CHEBI:15378"/>
        <dbReference type="ChEBI" id="CHEBI:16708"/>
        <dbReference type="ChEBI" id="CHEBI:57844"/>
        <dbReference type="ChEBI" id="CHEBI:59789"/>
        <dbReference type="ChEBI" id="CHEBI:82833"/>
        <dbReference type="ChEBI" id="CHEBI:194443"/>
        <dbReference type="EC" id="2.4.99.17"/>
    </reaction>
</comment>
<comment type="pathway">
    <text evidence="1">tRNA modification; tRNA-queuosine biosynthesis.</text>
</comment>
<comment type="subunit">
    <text evidence="1">Monomer.</text>
</comment>
<comment type="subcellular location">
    <subcellularLocation>
        <location evidence="1">Cytoplasm</location>
    </subcellularLocation>
</comment>
<comment type="similarity">
    <text evidence="1">Belongs to the QueA family.</text>
</comment>
<keyword id="KW-0963">Cytoplasm</keyword>
<keyword id="KW-0671">Queuosine biosynthesis</keyword>
<keyword id="KW-0949">S-adenosyl-L-methionine</keyword>
<keyword id="KW-0808">Transferase</keyword>